<protein>
    <recommendedName>
        <fullName evidence="1">Large ribosomal subunit protein uL29</fullName>
    </recommendedName>
    <alternativeName>
        <fullName evidence="2">50S ribosomal protein L29</fullName>
    </alternativeName>
</protein>
<evidence type="ECO:0000255" key="1">
    <source>
        <dbReference type="HAMAP-Rule" id="MF_00374"/>
    </source>
</evidence>
<evidence type="ECO:0000305" key="2"/>
<accession>C0MCB8</accession>
<proteinExistence type="inferred from homology"/>
<sequence length="68" mass="7904">MKLEEIKKFVAELRGLSQEELAKKENELKKELFDLRFQAAAGQLDQTARLNEVKKQIARVKTVQSEMK</sequence>
<reference key="1">
    <citation type="journal article" date="2009" name="PLoS Pathog.">
        <title>Genomic evidence for the evolution of Streptococcus equi: host restriction, increased virulence, and genetic exchange with human pathogens.</title>
        <authorList>
            <person name="Holden M.T.G."/>
            <person name="Heather Z."/>
            <person name="Paillot R."/>
            <person name="Steward K.F."/>
            <person name="Webb K."/>
            <person name="Ainslie F."/>
            <person name="Jourdan T."/>
            <person name="Bason N.C."/>
            <person name="Holroyd N.E."/>
            <person name="Mungall K."/>
            <person name="Quail M.A."/>
            <person name="Sanders M."/>
            <person name="Simmonds M."/>
            <person name="Willey D."/>
            <person name="Brooks K."/>
            <person name="Aanensen D.M."/>
            <person name="Spratt B.G."/>
            <person name="Jolley K.A."/>
            <person name="Maiden M.C.J."/>
            <person name="Kehoe M."/>
            <person name="Chanter N."/>
            <person name="Bentley S.D."/>
            <person name="Robinson C."/>
            <person name="Maskell D.J."/>
            <person name="Parkhill J."/>
            <person name="Waller A.S."/>
        </authorList>
    </citation>
    <scope>NUCLEOTIDE SEQUENCE [LARGE SCALE GENOMIC DNA]</scope>
    <source>
        <strain>H70</strain>
    </source>
</reference>
<name>RL29_STRS7</name>
<keyword id="KW-0687">Ribonucleoprotein</keyword>
<keyword id="KW-0689">Ribosomal protein</keyword>
<comment type="similarity">
    <text evidence="1">Belongs to the universal ribosomal protein uL29 family.</text>
</comment>
<dbReference type="EMBL" id="FM204884">
    <property type="protein sequence ID" value="CAW97659.1"/>
    <property type="molecule type" value="Genomic_DNA"/>
</dbReference>
<dbReference type="SMR" id="C0MCB8"/>
<dbReference type="KEGG" id="seq:SZO_00580"/>
<dbReference type="eggNOG" id="COG0255">
    <property type="taxonomic scope" value="Bacteria"/>
</dbReference>
<dbReference type="HOGENOM" id="CLU_158491_5_2_9"/>
<dbReference type="Proteomes" id="UP000001368">
    <property type="component" value="Chromosome"/>
</dbReference>
<dbReference type="GO" id="GO:0022625">
    <property type="term" value="C:cytosolic large ribosomal subunit"/>
    <property type="evidence" value="ECO:0007669"/>
    <property type="project" value="TreeGrafter"/>
</dbReference>
<dbReference type="GO" id="GO:0003735">
    <property type="term" value="F:structural constituent of ribosome"/>
    <property type="evidence" value="ECO:0007669"/>
    <property type="project" value="InterPro"/>
</dbReference>
<dbReference type="GO" id="GO:0006412">
    <property type="term" value="P:translation"/>
    <property type="evidence" value="ECO:0007669"/>
    <property type="project" value="UniProtKB-UniRule"/>
</dbReference>
<dbReference type="CDD" id="cd00427">
    <property type="entry name" value="Ribosomal_L29_HIP"/>
    <property type="match status" value="1"/>
</dbReference>
<dbReference type="FunFam" id="1.10.287.310:FF:000001">
    <property type="entry name" value="50S ribosomal protein L29"/>
    <property type="match status" value="1"/>
</dbReference>
<dbReference type="Gene3D" id="1.10.287.310">
    <property type="match status" value="1"/>
</dbReference>
<dbReference type="HAMAP" id="MF_00374">
    <property type="entry name" value="Ribosomal_uL29"/>
    <property type="match status" value="1"/>
</dbReference>
<dbReference type="InterPro" id="IPR050063">
    <property type="entry name" value="Ribosomal_protein_uL29"/>
</dbReference>
<dbReference type="InterPro" id="IPR001854">
    <property type="entry name" value="Ribosomal_uL29"/>
</dbReference>
<dbReference type="InterPro" id="IPR018254">
    <property type="entry name" value="Ribosomal_uL29_CS"/>
</dbReference>
<dbReference type="InterPro" id="IPR036049">
    <property type="entry name" value="Ribosomal_uL29_sf"/>
</dbReference>
<dbReference type="NCBIfam" id="TIGR00012">
    <property type="entry name" value="L29"/>
    <property type="match status" value="1"/>
</dbReference>
<dbReference type="PANTHER" id="PTHR10916">
    <property type="entry name" value="60S RIBOSOMAL PROTEIN L35/50S RIBOSOMAL PROTEIN L29"/>
    <property type="match status" value="1"/>
</dbReference>
<dbReference type="PANTHER" id="PTHR10916:SF0">
    <property type="entry name" value="LARGE RIBOSOMAL SUBUNIT PROTEIN UL29C"/>
    <property type="match status" value="1"/>
</dbReference>
<dbReference type="Pfam" id="PF00831">
    <property type="entry name" value="Ribosomal_L29"/>
    <property type="match status" value="1"/>
</dbReference>
<dbReference type="SUPFAM" id="SSF46561">
    <property type="entry name" value="Ribosomal protein L29 (L29p)"/>
    <property type="match status" value="1"/>
</dbReference>
<dbReference type="PROSITE" id="PS00579">
    <property type="entry name" value="RIBOSOMAL_L29"/>
    <property type="match status" value="1"/>
</dbReference>
<gene>
    <name evidence="1" type="primary">rpmC</name>
    <name type="ordered locus">SZO_00580</name>
</gene>
<organism>
    <name type="scientific">Streptococcus equi subsp. zooepidemicus (strain H70)</name>
    <dbReference type="NCBI Taxonomy" id="553483"/>
    <lineage>
        <taxon>Bacteria</taxon>
        <taxon>Bacillati</taxon>
        <taxon>Bacillota</taxon>
        <taxon>Bacilli</taxon>
        <taxon>Lactobacillales</taxon>
        <taxon>Streptococcaceae</taxon>
        <taxon>Streptococcus</taxon>
    </lineage>
</organism>
<feature type="chain" id="PRO_1000205638" description="Large ribosomal subunit protein uL29">
    <location>
        <begin position="1"/>
        <end position="68"/>
    </location>
</feature>